<evidence type="ECO:0000255" key="1">
    <source>
        <dbReference type="HAMAP-Rule" id="MF_00081"/>
    </source>
</evidence>
<proteinExistence type="inferred from homology"/>
<comment type="function">
    <text evidence="1">Negative regulator of class I heat shock genes (grpE-dnaK-dnaJ and groELS operons). Prevents heat-shock induction of these operons.</text>
</comment>
<comment type="similarity">
    <text evidence="1">Belongs to the HrcA family.</text>
</comment>
<feature type="chain" id="PRO_1000010419" description="Heat-inducible transcription repressor HrcA">
    <location>
        <begin position="1"/>
        <end position="345"/>
    </location>
</feature>
<protein>
    <recommendedName>
        <fullName evidence="1">Heat-inducible transcription repressor HrcA</fullName>
    </recommendedName>
</protein>
<name>HRCA_LISW6</name>
<reference key="1">
    <citation type="journal article" date="2006" name="J. Bacteriol.">
        <title>Whole-genome sequence of Listeria welshimeri reveals common steps in genome reduction with Listeria innocua as compared to Listeria monocytogenes.</title>
        <authorList>
            <person name="Hain T."/>
            <person name="Steinweg C."/>
            <person name="Kuenne C.T."/>
            <person name="Billion A."/>
            <person name="Ghai R."/>
            <person name="Chatterjee S.S."/>
            <person name="Domann E."/>
            <person name="Kaerst U."/>
            <person name="Goesmann A."/>
            <person name="Bekel T."/>
            <person name="Bartels D."/>
            <person name="Kaiser O."/>
            <person name="Meyer F."/>
            <person name="Puehler A."/>
            <person name="Weisshaar B."/>
            <person name="Wehland J."/>
            <person name="Liang C."/>
            <person name="Dandekar T."/>
            <person name="Lampidis R."/>
            <person name="Kreft J."/>
            <person name="Goebel W."/>
            <person name="Chakraborty T."/>
        </authorList>
    </citation>
    <scope>NUCLEOTIDE SEQUENCE [LARGE SCALE GENOMIC DNA]</scope>
    <source>
        <strain>ATCC 35897 / DSM 20650 / CCUG 15529 / CIP 8149 / NCTC 11857 / SLCC 5334 / V8</strain>
    </source>
</reference>
<sequence>MLTERQLLIFRAIIDHFTWTIQPVGSKNLLKEKGLPYSSATIRNEMGVLEEYGFIEKTHSSSGRVPSEKGYRFYVDYLLQLKKLDKSDRQMIRSFFSENYYEMEGLIQNSALMLSDLTNYTSILLGPEATKNHLSGFRFVPINNFQAMLILITDQGHVDNHLVTIPEGTTLSDIERMVNILNERLVGLSLDDLKVQIPMEVKELLGKHVRNYESFMHVFSDSFAQASQQKVYFGGKTNILNQPEFHDINKVREMLHLMEEEQDVYELFRDIPDGLQVKIGRENNNSLMEDCSIITATYNIAGERVGGIVLLGPTRMEYNRMMGLVDVMSRDLTDVLTKLYRDNQN</sequence>
<organism>
    <name type="scientific">Listeria welshimeri serovar 6b (strain ATCC 35897 / DSM 20650 / CCUG 15529 / CIP 8149 / NCTC 11857 / SLCC 5334 / V8)</name>
    <dbReference type="NCBI Taxonomy" id="386043"/>
    <lineage>
        <taxon>Bacteria</taxon>
        <taxon>Bacillati</taxon>
        <taxon>Bacillota</taxon>
        <taxon>Bacilli</taxon>
        <taxon>Bacillales</taxon>
        <taxon>Listeriaceae</taxon>
        <taxon>Listeria</taxon>
    </lineage>
</organism>
<keyword id="KW-0678">Repressor</keyword>
<keyword id="KW-0346">Stress response</keyword>
<keyword id="KW-0804">Transcription</keyword>
<keyword id="KW-0805">Transcription regulation</keyword>
<gene>
    <name evidence="1" type="primary">hrcA</name>
    <name type="ordered locus">lwe1490</name>
</gene>
<accession>A0AIS6</accession>
<dbReference type="EMBL" id="AM263198">
    <property type="protein sequence ID" value="CAK20908.1"/>
    <property type="molecule type" value="Genomic_DNA"/>
</dbReference>
<dbReference type="RefSeq" id="WP_011702281.1">
    <property type="nucleotide sequence ID" value="NC_008555.1"/>
</dbReference>
<dbReference type="SMR" id="A0AIS6"/>
<dbReference type="STRING" id="386043.lwe1490"/>
<dbReference type="KEGG" id="lwe:lwe1490"/>
<dbReference type="eggNOG" id="COG1420">
    <property type="taxonomic scope" value="Bacteria"/>
</dbReference>
<dbReference type="HOGENOM" id="CLU_050019_1_0_9"/>
<dbReference type="OrthoDB" id="9783139at2"/>
<dbReference type="Proteomes" id="UP000000779">
    <property type="component" value="Chromosome"/>
</dbReference>
<dbReference type="GO" id="GO:0003677">
    <property type="term" value="F:DNA binding"/>
    <property type="evidence" value="ECO:0007669"/>
    <property type="project" value="InterPro"/>
</dbReference>
<dbReference type="GO" id="GO:0045892">
    <property type="term" value="P:negative regulation of DNA-templated transcription"/>
    <property type="evidence" value="ECO:0007669"/>
    <property type="project" value="UniProtKB-UniRule"/>
</dbReference>
<dbReference type="Gene3D" id="3.30.450.40">
    <property type="match status" value="1"/>
</dbReference>
<dbReference type="Gene3D" id="3.30.390.60">
    <property type="entry name" value="Heat-inducible transcription repressor hrca homolog, domain 3"/>
    <property type="match status" value="1"/>
</dbReference>
<dbReference type="Gene3D" id="1.10.10.10">
    <property type="entry name" value="Winged helix-like DNA-binding domain superfamily/Winged helix DNA-binding domain"/>
    <property type="match status" value="1"/>
</dbReference>
<dbReference type="HAMAP" id="MF_00081">
    <property type="entry name" value="HrcA"/>
    <property type="match status" value="1"/>
</dbReference>
<dbReference type="InterPro" id="IPR029016">
    <property type="entry name" value="GAF-like_dom_sf"/>
</dbReference>
<dbReference type="InterPro" id="IPR002571">
    <property type="entry name" value="HrcA"/>
</dbReference>
<dbReference type="InterPro" id="IPR021153">
    <property type="entry name" value="HrcA_C"/>
</dbReference>
<dbReference type="InterPro" id="IPR036388">
    <property type="entry name" value="WH-like_DNA-bd_sf"/>
</dbReference>
<dbReference type="InterPro" id="IPR036390">
    <property type="entry name" value="WH_DNA-bd_sf"/>
</dbReference>
<dbReference type="InterPro" id="IPR023120">
    <property type="entry name" value="WHTH_transcript_rep_HrcA_IDD"/>
</dbReference>
<dbReference type="NCBIfam" id="TIGR00331">
    <property type="entry name" value="hrcA"/>
    <property type="match status" value="1"/>
</dbReference>
<dbReference type="PANTHER" id="PTHR34824">
    <property type="entry name" value="HEAT-INDUCIBLE TRANSCRIPTION REPRESSOR HRCA"/>
    <property type="match status" value="1"/>
</dbReference>
<dbReference type="PANTHER" id="PTHR34824:SF1">
    <property type="entry name" value="HEAT-INDUCIBLE TRANSCRIPTION REPRESSOR HRCA"/>
    <property type="match status" value="1"/>
</dbReference>
<dbReference type="Pfam" id="PF01628">
    <property type="entry name" value="HrcA"/>
    <property type="match status" value="1"/>
</dbReference>
<dbReference type="PIRSF" id="PIRSF005485">
    <property type="entry name" value="HrcA"/>
    <property type="match status" value="1"/>
</dbReference>
<dbReference type="SUPFAM" id="SSF55781">
    <property type="entry name" value="GAF domain-like"/>
    <property type="match status" value="1"/>
</dbReference>
<dbReference type="SUPFAM" id="SSF46785">
    <property type="entry name" value="Winged helix' DNA-binding domain"/>
    <property type="match status" value="1"/>
</dbReference>